<accession>Q4UX47</accession>
<feature type="chain" id="PRO_0000259016" description="Nucleotide-binding protein XC_1307">
    <location>
        <begin position="1"/>
        <end position="282"/>
    </location>
</feature>
<feature type="binding site" evidence="1">
    <location>
        <begin position="5"/>
        <end position="12"/>
    </location>
    <ligand>
        <name>ATP</name>
        <dbReference type="ChEBI" id="CHEBI:30616"/>
    </ligand>
</feature>
<feature type="binding site" evidence="1">
    <location>
        <begin position="57"/>
        <end position="60"/>
    </location>
    <ligand>
        <name>GTP</name>
        <dbReference type="ChEBI" id="CHEBI:37565"/>
    </ligand>
</feature>
<gene>
    <name type="ordered locus">XC_1307</name>
</gene>
<evidence type="ECO:0000255" key="1">
    <source>
        <dbReference type="HAMAP-Rule" id="MF_00636"/>
    </source>
</evidence>
<reference key="1">
    <citation type="journal article" date="2005" name="Genome Res.">
        <title>Comparative and functional genomic analyses of the pathogenicity of phytopathogen Xanthomonas campestris pv. campestris.</title>
        <authorList>
            <person name="Qian W."/>
            <person name="Jia Y."/>
            <person name="Ren S.-X."/>
            <person name="He Y.-Q."/>
            <person name="Feng J.-X."/>
            <person name="Lu L.-F."/>
            <person name="Sun Q."/>
            <person name="Ying G."/>
            <person name="Tang D.-J."/>
            <person name="Tang H."/>
            <person name="Wu W."/>
            <person name="Hao P."/>
            <person name="Wang L."/>
            <person name="Jiang B.-L."/>
            <person name="Zeng S."/>
            <person name="Gu W.-Y."/>
            <person name="Lu G."/>
            <person name="Rong L."/>
            <person name="Tian Y."/>
            <person name="Yao Z."/>
            <person name="Fu G."/>
            <person name="Chen B."/>
            <person name="Fang R."/>
            <person name="Qiang B."/>
            <person name="Chen Z."/>
            <person name="Zhao G.-P."/>
            <person name="Tang J.-L."/>
            <person name="He C."/>
        </authorList>
    </citation>
    <scope>NUCLEOTIDE SEQUENCE [LARGE SCALE GENOMIC DNA]</scope>
    <source>
        <strain>8004</strain>
    </source>
</reference>
<name>Y1307_XANC8</name>
<organism>
    <name type="scientific">Xanthomonas campestris pv. campestris (strain 8004)</name>
    <dbReference type="NCBI Taxonomy" id="314565"/>
    <lineage>
        <taxon>Bacteria</taxon>
        <taxon>Pseudomonadati</taxon>
        <taxon>Pseudomonadota</taxon>
        <taxon>Gammaproteobacteria</taxon>
        <taxon>Lysobacterales</taxon>
        <taxon>Lysobacteraceae</taxon>
        <taxon>Xanthomonas</taxon>
    </lineage>
</organism>
<comment type="function">
    <text evidence="1">Displays ATPase and GTPase activities.</text>
</comment>
<comment type="similarity">
    <text evidence="1">Belongs to the RapZ-like family.</text>
</comment>
<proteinExistence type="inferred from homology"/>
<dbReference type="EMBL" id="CP000050">
    <property type="protein sequence ID" value="AAY48376.1"/>
    <property type="molecule type" value="Genomic_DNA"/>
</dbReference>
<dbReference type="SMR" id="Q4UX47"/>
<dbReference type="KEGG" id="xcb:XC_1307"/>
<dbReference type="HOGENOM" id="CLU_059558_1_1_6"/>
<dbReference type="PHI-base" id="PHI:7824"/>
<dbReference type="Proteomes" id="UP000000420">
    <property type="component" value="Chromosome"/>
</dbReference>
<dbReference type="GO" id="GO:0005524">
    <property type="term" value="F:ATP binding"/>
    <property type="evidence" value="ECO:0007669"/>
    <property type="project" value="UniProtKB-UniRule"/>
</dbReference>
<dbReference type="GO" id="GO:0005525">
    <property type="term" value="F:GTP binding"/>
    <property type="evidence" value="ECO:0007669"/>
    <property type="project" value="UniProtKB-UniRule"/>
</dbReference>
<dbReference type="HAMAP" id="MF_00636">
    <property type="entry name" value="RapZ_like"/>
    <property type="match status" value="1"/>
</dbReference>
<dbReference type="InterPro" id="IPR027417">
    <property type="entry name" value="P-loop_NTPase"/>
</dbReference>
<dbReference type="InterPro" id="IPR005337">
    <property type="entry name" value="RapZ-like"/>
</dbReference>
<dbReference type="InterPro" id="IPR053930">
    <property type="entry name" value="RapZ-like_N"/>
</dbReference>
<dbReference type="InterPro" id="IPR053931">
    <property type="entry name" value="RapZ_C"/>
</dbReference>
<dbReference type="NCBIfam" id="NF003828">
    <property type="entry name" value="PRK05416.1"/>
    <property type="match status" value="1"/>
</dbReference>
<dbReference type="PANTHER" id="PTHR30448">
    <property type="entry name" value="RNASE ADAPTER PROTEIN RAPZ"/>
    <property type="match status" value="1"/>
</dbReference>
<dbReference type="PANTHER" id="PTHR30448:SF0">
    <property type="entry name" value="RNASE ADAPTER PROTEIN RAPZ"/>
    <property type="match status" value="1"/>
</dbReference>
<dbReference type="Pfam" id="PF22740">
    <property type="entry name" value="PapZ_C"/>
    <property type="match status" value="1"/>
</dbReference>
<dbReference type="Pfam" id="PF03668">
    <property type="entry name" value="RapZ-like_N"/>
    <property type="match status" value="1"/>
</dbReference>
<dbReference type="PIRSF" id="PIRSF005052">
    <property type="entry name" value="P-loopkin"/>
    <property type="match status" value="1"/>
</dbReference>
<dbReference type="SUPFAM" id="SSF52540">
    <property type="entry name" value="P-loop containing nucleoside triphosphate hydrolases"/>
    <property type="match status" value="1"/>
</dbReference>
<keyword id="KW-0067">ATP-binding</keyword>
<keyword id="KW-0342">GTP-binding</keyword>
<keyword id="KW-0547">Nucleotide-binding</keyword>
<sequence length="282" mass="32064">MIVSGLSGSGKSVALKTFEDLDYYCSDNLPVELLPDFVRSRLRGNPLGDQRLAVGIDVRSRSDLTQLAQWRQAAQEYGIEARLLFFEASDEALLKRYADTRRRHPLSQLGLALPEAITRERELTAPLRAQADAIIDTSALNVHQLRRRVVTEFALGNSDRLSLLFESFAYKRGVPAEADFVFDARVLPNPHWDPELRPLTGRDAGVRDYLDKEPDVIRYSAQIVDLLDTWLPRLRNDTRSYVTIAFGCTGGKHRSVYLAERMARHAREQGWPEVATFHREQD</sequence>
<protein>
    <recommendedName>
        <fullName evidence="1">Nucleotide-binding protein XC_1307</fullName>
    </recommendedName>
</protein>